<protein>
    <recommendedName>
        <fullName evidence="1">Pole-localizer protein TmaR</fullName>
    </recommendedName>
</protein>
<dbReference type="EMBL" id="CP001158">
    <property type="protein sequence ID" value="ACL30344.1"/>
    <property type="molecule type" value="Genomic_DNA"/>
</dbReference>
<dbReference type="RefSeq" id="WP_009874506.1">
    <property type="nucleotide sequence ID" value="NC_011834.1"/>
</dbReference>
<dbReference type="SMR" id="B8D879"/>
<dbReference type="KEGG" id="bau:BUAPTUC7_550"/>
<dbReference type="HOGENOM" id="CLU_153146_0_0_6"/>
<dbReference type="GO" id="GO:0005829">
    <property type="term" value="C:cytosol"/>
    <property type="evidence" value="ECO:0007669"/>
    <property type="project" value="TreeGrafter"/>
</dbReference>
<dbReference type="HAMAP" id="MF_00683">
    <property type="entry name" value="Pole_loc_TmaR"/>
    <property type="match status" value="1"/>
</dbReference>
<dbReference type="InterPro" id="IPR007458">
    <property type="entry name" value="DUF496"/>
</dbReference>
<dbReference type="NCBIfam" id="NF003844">
    <property type="entry name" value="PRK05423.1"/>
    <property type="match status" value="1"/>
</dbReference>
<dbReference type="PANTHER" id="PTHR39591">
    <property type="entry name" value="UPF0265 PROTEIN YEEX"/>
    <property type="match status" value="1"/>
</dbReference>
<dbReference type="PANTHER" id="PTHR39591:SF1">
    <property type="entry name" value="UPF0265 PROTEIN YEEX"/>
    <property type="match status" value="1"/>
</dbReference>
<dbReference type="Pfam" id="PF04363">
    <property type="entry name" value="DUF496"/>
    <property type="match status" value="1"/>
</dbReference>
<dbReference type="PIRSF" id="PIRSF028773">
    <property type="entry name" value="UCP028773"/>
    <property type="match status" value="1"/>
</dbReference>
<evidence type="ECO:0000255" key="1">
    <source>
        <dbReference type="HAMAP-Rule" id="MF_00683"/>
    </source>
</evidence>
<keyword id="KW-0175">Coiled coil</keyword>
<keyword id="KW-0963">Cytoplasm</keyword>
<comment type="function">
    <text evidence="1">Pole-localizer protein involved in the regulation of several cellular processes.</text>
</comment>
<comment type="subcellular location">
    <subcellularLocation>
        <location evidence="1">Cytoplasm</location>
    </subcellularLocation>
</comment>
<comment type="similarity">
    <text evidence="1">Belongs to the pole-localizer TmaR family.</text>
</comment>
<reference key="1">
    <citation type="journal article" date="2009" name="Science">
        <title>The dynamics and time scale of ongoing genomic erosion in symbiotic bacteria.</title>
        <authorList>
            <person name="Moran N.A."/>
            <person name="McLaughlin H.J."/>
            <person name="Sorek R."/>
        </authorList>
    </citation>
    <scope>NUCLEOTIDE SEQUENCE [LARGE SCALE GENOMIC DNA]</scope>
    <source>
        <strain>Tuc7</strain>
    </source>
</reference>
<sequence length="102" mass="12546">MSDTKKSFKNVLEFVHKFRRKNKIKREISDIEKKIRDNQKRILLLDNLIQYITLDMNYEEIKKIIFMMKSDYEDRIDDYIVKNAELSKEKRNLSKELKFIIK</sequence>
<organism>
    <name type="scientific">Buchnera aphidicola subsp. Acyrthosiphon pisum (strain Tuc7)</name>
    <dbReference type="NCBI Taxonomy" id="561501"/>
    <lineage>
        <taxon>Bacteria</taxon>
        <taxon>Pseudomonadati</taxon>
        <taxon>Pseudomonadota</taxon>
        <taxon>Gammaproteobacteria</taxon>
        <taxon>Enterobacterales</taxon>
        <taxon>Erwiniaceae</taxon>
        <taxon>Buchnera</taxon>
    </lineage>
</organism>
<accession>B8D879</accession>
<name>TMAR_BUCAT</name>
<proteinExistence type="inferred from homology"/>
<gene>
    <name evidence="1" type="primary">tmaR</name>
    <name type="ordered locus">BUAPTUC7_550</name>
</gene>
<feature type="chain" id="PRO_1000147739" description="Pole-localizer protein TmaR">
    <location>
        <begin position="1"/>
        <end position="102"/>
    </location>
</feature>
<feature type="coiled-coil region" evidence="1">
    <location>
        <begin position="69"/>
        <end position="96"/>
    </location>
</feature>